<organism>
    <name type="scientific">Lacticaseibacillus paracasei (strain ATCC 334 / BCRC 17002 / CCUG 31169 / CIP 107868 / KCTC 3260 / NRRL B-441)</name>
    <name type="common">Lactobacillus paracasei</name>
    <dbReference type="NCBI Taxonomy" id="321967"/>
    <lineage>
        <taxon>Bacteria</taxon>
        <taxon>Bacillati</taxon>
        <taxon>Bacillota</taxon>
        <taxon>Bacilli</taxon>
        <taxon>Lactobacillales</taxon>
        <taxon>Lactobacillaceae</taxon>
        <taxon>Lacticaseibacillus</taxon>
    </lineage>
</organism>
<keyword id="KW-0255">Endonuclease</keyword>
<keyword id="KW-0378">Hydrolase</keyword>
<keyword id="KW-0479">Metal-binding</keyword>
<keyword id="KW-0540">Nuclease</keyword>
<keyword id="KW-1185">Reference proteome</keyword>
<keyword id="KW-0819">tRNA processing</keyword>
<keyword id="KW-0862">Zinc</keyword>
<gene>
    <name evidence="1" type="primary">rnz</name>
    <name type="ordered locus">LSEI_1353</name>
</gene>
<protein>
    <recommendedName>
        <fullName evidence="1">Ribonuclease Z</fullName>
        <shortName evidence="1">RNase Z</shortName>
        <ecNumber evidence="1">3.1.26.11</ecNumber>
    </recommendedName>
    <alternativeName>
        <fullName evidence="1">tRNA 3 endonuclease</fullName>
    </alternativeName>
    <alternativeName>
        <fullName evidence="1">tRNase Z</fullName>
    </alternativeName>
</protein>
<name>RNZ_LACP3</name>
<dbReference type="EC" id="3.1.26.11" evidence="1"/>
<dbReference type="EMBL" id="CP000423">
    <property type="protein sequence ID" value="ABJ70132.1"/>
    <property type="molecule type" value="Genomic_DNA"/>
</dbReference>
<dbReference type="RefSeq" id="WP_003574983.1">
    <property type="nucleotide sequence ID" value="NC_008526.1"/>
</dbReference>
<dbReference type="RefSeq" id="YP_806574.1">
    <property type="nucleotide sequence ID" value="NC_008526.1"/>
</dbReference>
<dbReference type="SMR" id="Q039J0"/>
<dbReference type="STRING" id="321967.LSEI_1353"/>
<dbReference type="PaxDb" id="321967-LSEI_1353"/>
<dbReference type="KEGG" id="lca:LSEI_1353"/>
<dbReference type="PATRIC" id="fig|321967.11.peg.1332"/>
<dbReference type="HOGENOM" id="CLU_031317_2_0_9"/>
<dbReference type="Proteomes" id="UP000001651">
    <property type="component" value="Chromosome"/>
</dbReference>
<dbReference type="GO" id="GO:0042781">
    <property type="term" value="F:3'-tRNA processing endoribonuclease activity"/>
    <property type="evidence" value="ECO:0007669"/>
    <property type="project" value="UniProtKB-UniRule"/>
</dbReference>
<dbReference type="GO" id="GO:0008270">
    <property type="term" value="F:zinc ion binding"/>
    <property type="evidence" value="ECO:0007669"/>
    <property type="project" value="UniProtKB-UniRule"/>
</dbReference>
<dbReference type="CDD" id="cd07717">
    <property type="entry name" value="RNaseZ_ZiPD-like_MBL-fold"/>
    <property type="match status" value="1"/>
</dbReference>
<dbReference type="FunFam" id="3.60.15.10:FF:000002">
    <property type="entry name" value="Ribonuclease Z"/>
    <property type="match status" value="1"/>
</dbReference>
<dbReference type="Gene3D" id="3.60.15.10">
    <property type="entry name" value="Ribonuclease Z/Hydroxyacylglutathione hydrolase-like"/>
    <property type="match status" value="1"/>
</dbReference>
<dbReference type="HAMAP" id="MF_01818">
    <property type="entry name" value="RNase_Z_BN"/>
    <property type="match status" value="1"/>
</dbReference>
<dbReference type="InterPro" id="IPR001279">
    <property type="entry name" value="Metallo-B-lactamas"/>
</dbReference>
<dbReference type="InterPro" id="IPR036866">
    <property type="entry name" value="RibonucZ/Hydroxyglut_hydro"/>
</dbReference>
<dbReference type="InterPro" id="IPR013471">
    <property type="entry name" value="RNase_Z/BN"/>
</dbReference>
<dbReference type="NCBIfam" id="NF000801">
    <property type="entry name" value="PRK00055.1-3"/>
    <property type="match status" value="1"/>
</dbReference>
<dbReference type="NCBIfam" id="TIGR02651">
    <property type="entry name" value="RNase_Z"/>
    <property type="match status" value="1"/>
</dbReference>
<dbReference type="PANTHER" id="PTHR46018">
    <property type="entry name" value="ZINC PHOSPHODIESTERASE ELAC PROTEIN 1"/>
    <property type="match status" value="1"/>
</dbReference>
<dbReference type="PANTHER" id="PTHR46018:SF2">
    <property type="entry name" value="ZINC PHOSPHODIESTERASE ELAC PROTEIN 1"/>
    <property type="match status" value="1"/>
</dbReference>
<dbReference type="Pfam" id="PF00753">
    <property type="entry name" value="Lactamase_B"/>
    <property type="match status" value="1"/>
</dbReference>
<dbReference type="SUPFAM" id="SSF56281">
    <property type="entry name" value="Metallo-hydrolase/oxidoreductase"/>
    <property type="match status" value="1"/>
</dbReference>
<proteinExistence type="inferred from homology"/>
<sequence>MEIQFLGTGAGSPSKSRNVSSLALKLLDERNEVWLFDAGEGTQHQILQTAIRPRKIAKVFITHLHGDHIFGLPGFLASRSNQGGTDPLTIYGPSGIEDFVKTSLKVSQSHLSYPLKFVLLQHPGVAFEDQTFKVTFDRLDHRITSFGFRIEEKPHPGELLIDKVRAAKIPSGPVYAALKAGETVTLPDGRIFDGHDFIGPAQPGRTVAIFGDTRMCNRALPLAAGADVLVHESTFGPDESQLAKQYYHATNVQAAALAKRAGVGRLLLNHISARYLSPGVAMLEKTARQIFPNTHVVKDFEEINIPFRSEQSEPAVTVKS</sequence>
<accession>Q039J0</accession>
<reference key="1">
    <citation type="journal article" date="2006" name="Proc. Natl. Acad. Sci. U.S.A.">
        <title>Comparative genomics of the lactic acid bacteria.</title>
        <authorList>
            <person name="Makarova K.S."/>
            <person name="Slesarev A."/>
            <person name="Wolf Y.I."/>
            <person name="Sorokin A."/>
            <person name="Mirkin B."/>
            <person name="Koonin E.V."/>
            <person name="Pavlov A."/>
            <person name="Pavlova N."/>
            <person name="Karamychev V."/>
            <person name="Polouchine N."/>
            <person name="Shakhova V."/>
            <person name="Grigoriev I."/>
            <person name="Lou Y."/>
            <person name="Rohksar D."/>
            <person name="Lucas S."/>
            <person name="Huang K."/>
            <person name="Goodstein D.M."/>
            <person name="Hawkins T."/>
            <person name="Plengvidhya V."/>
            <person name="Welker D."/>
            <person name="Hughes J."/>
            <person name="Goh Y."/>
            <person name="Benson A."/>
            <person name="Baldwin K."/>
            <person name="Lee J.-H."/>
            <person name="Diaz-Muniz I."/>
            <person name="Dosti B."/>
            <person name="Smeianov V."/>
            <person name="Wechter W."/>
            <person name="Barabote R."/>
            <person name="Lorca G."/>
            <person name="Altermann E."/>
            <person name="Barrangou R."/>
            <person name="Ganesan B."/>
            <person name="Xie Y."/>
            <person name="Rawsthorne H."/>
            <person name="Tamir D."/>
            <person name="Parker C."/>
            <person name="Breidt F."/>
            <person name="Broadbent J.R."/>
            <person name="Hutkins R."/>
            <person name="O'Sullivan D."/>
            <person name="Steele J."/>
            <person name="Unlu G."/>
            <person name="Saier M.H. Jr."/>
            <person name="Klaenhammer T."/>
            <person name="Richardson P."/>
            <person name="Kozyavkin S."/>
            <person name="Weimer B.C."/>
            <person name="Mills D.A."/>
        </authorList>
    </citation>
    <scope>NUCLEOTIDE SEQUENCE [LARGE SCALE GENOMIC DNA]</scope>
    <source>
        <strain>ATCC 334 / BCRC 17002 / CCUG 31169 / CIP 107868 / KCTC 3260 / NRRL B-441</strain>
    </source>
</reference>
<evidence type="ECO:0000255" key="1">
    <source>
        <dbReference type="HAMAP-Rule" id="MF_01818"/>
    </source>
</evidence>
<feature type="chain" id="PRO_1000070285" description="Ribonuclease Z">
    <location>
        <begin position="1"/>
        <end position="320"/>
    </location>
</feature>
<feature type="active site" description="Proton acceptor" evidence="1">
    <location>
        <position position="67"/>
    </location>
</feature>
<feature type="binding site" evidence="1">
    <location>
        <position position="63"/>
    </location>
    <ligand>
        <name>Zn(2+)</name>
        <dbReference type="ChEBI" id="CHEBI:29105"/>
        <label>1</label>
        <note>catalytic</note>
    </ligand>
</feature>
<feature type="binding site" evidence="1">
    <location>
        <position position="65"/>
    </location>
    <ligand>
        <name>Zn(2+)</name>
        <dbReference type="ChEBI" id="CHEBI:29105"/>
        <label>1</label>
        <note>catalytic</note>
    </ligand>
</feature>
<feature type="binding site" evidence="1">
    <location>
        <position position="67"/>
    </location>
    <ligand>
        <name>Zn(2+)</name>
        <dbReference type="ChEBI" id="CHEBI:29105"/>
        <label>2</label>
        <note>catalytic</note>
    </ligand>
</feature>
<feature type="binding site" evidence="1">
    <location>
        <position position="68"/>
    </location>
    <ligand>
        <name>Zn(2+)</name>
        <dbReference type="ChEBI" id="CHEBI:29105"/>
        <label>2</label>
        <note>catalytic</note>
    </ligand>
</feature>
<feature type="binding site" evidence="1">
    <location>
        <position position="141"/>
    </location>
    <ligand>
        <name>Zn(2+)</name>
        <dbReference type="ChEBI" id="CHEBI:29105"/>
        <label>1</label>
        <note>catalytic</note>
    </ligand>
</feature>
<feature type="binding site" evidence="1">
    <location>
        <position position="212"/>
    </location>
    <ligand>
        <name>Zn(2+)</name>
        <dbReference type="ChEBI" id="CHEBI:29105"/>
        <label>1</label>
        <note>catalytic</note>
    </ligand>
</feature>
<feature type="binding site" evidence="1">
    <location>
        <position position="212"/>
    </location>
    <ligand>
        <name>Zn(2+)</name>
        <dbReference type="ChEBI" id="CHEBI:29105"/>
        <label>2</label>
        <note>catalytic</note>
    </ligand>
</feature>
<feature type="binding site" evidence="1">
    <location>
        <position position="270"/>
    </location>
    <ligand>
        <name>Zn(2+)</name>
        <dbReference type="ChEBI" id="CHEBI:29105"/>
        <label>2</label>
        <note>catalytic</note>
    </ligand>
</feature>
<comment type="function">
    <text evidence="1">Zinc phosphodiesterase, which displays some tRNA 3'-processing endonuclease activity. Probably involved in tRNA maturation, by removing a 3'-trailer from precursor tRNA.</text>
</comment>
<comment type="catalytic activity">
    <reaction evidence="1">
        <text>Endonucleolytic cleavage of RNA, removing extra 3' nucleotides from tRNA precursor, generating 3' termini of tRNAs. A 3'-hydroxy group is left at the tRNA terminus and a 5'-phosphoryl group is left at the trailer molecule.</text>
        <dbReference type="EC" id="3.1.26.11"/>
    </reaction>
</comment>
<comment type="cofactor">
    <cofactor evidence="1">
        <name>Zn(2+)</name>
        <dbReference type="ChEBI" id="CHEBI:29105"/>
    </cofactor>
    <text evidence="1">Binds 2 Zn(2+) ions.</text>
</comment>
<comment type="subunit">
    <text evidence="1">Homodimer.</text>
</comment>
<comment type="similarity">
    <text evidence="1">Belongs to the RNase Z family.</text>
</comment>